<accession>P45510</accession>
<comment type="function">
    <text>Catalyzes the phosphorylation of dihydroxyacetone.</text>
</comment>
<comment type="catalytic activity">
    <reaction evidence="3 4">
        <text>dihydroxyacetone + ATP = dihydroxyacetone phosphate + ADP + H(+)</text>
        <dbReference type="Rhea" id="RHEA:15773"/>
        <dbReference type="ChEBI" id="CHEBI:15378"/>
        <dbReference type="ChEBI" id="CHEBI:16016"/>
        <dbReference type="ChEBI" id="CHEBI:30616"/>
        <dbReference type="ChEBI" id="CHEBI:57642"/>
        <dbReference type="ChEBI" id="CHEBI:456216"/>
        <dbReference type="EC" id="2.7.1.29"/>
    </reaction>
</comment>
<comment type="cofactor">
    <cofactor evidence="4">
        <name>Mg(2+)</name>
        <dbReference type="ChEBI" id="CHEBI:18420"/>
    </cofactor>
    <cofactor evidence="4">
        <name>Ca(2+)</name>
        <dbReference type="ChEBI" id="CHEBI:29108"/>
    </cofactor>
    <text evidence="4">Divalent metal cations, Mg(2+) or Ca(2+).</text>
</comment>
<comment type="biophysicochemical properties">
    <kinetics>
        <KM evidence="4">30 uM for dihydroxyacetone</KM>
        <KM evidence="4">70 uM for ATP</KM>
    </kinetics>
</comment>
<comment type="pathway">
    <text>Polyol metabolism; glycerol fermentation; glycerone phosphate from glycerol (oxidative route): step 2/2.</text>
</comment>
<comment type="subunit">
    <text evidence="3 4">Homodimer.</text>
</comment>
<comment type="domain">
    <text>The C-terminal domain consists of a eight-helix alpha barrel. The eight helices form a pocket that includes a tightly bound phospholipid. The cellular function of this lipid is unknown; it has no significant effect on enzyme activity.</text>
</comment>
<gene>
    <name type="primary">dhaK</name>
</gene>
<sequence length="552" mass="57940">MSQFFFNQRTHLVSDVIDGAIIASPWNNLARLESDPAIRIVVRRDLNKNNVAVISGGGSGHEPAHVGFIGKGMLTAAVCGDVFASPSVDAVLTAIQAVTGEAGCLLIVKNYTGDRLNFGLAAEKARRLGYNVEMLIVGDDISLPDNKHPRGIAGTILVHKIAGYFAERGYNLATVLREAQYAASNTFSLGVALSSCHLPQETDAAPRHHPGHAELGMGIHGEPGASVIDTQNSAQVVNLMVDKLLAALPETGRLAVMINNLGGVSVAEMAIITRELASSPLHSRIDWLIGPASLVTALDMKGFSLTAIVLEESIEKALLTEVETSNWPTPVPPREITCVVSSHASARVEFQPSANALVAGIVELVTATLSDLETHLNALDAKVGDGDTGSTFAAAAREIASLLHRQQLPLNNLATLFALIGERLTVVMGGSSGVLMSIFFTAAGQKLEQGANVVEALNTGLAQMKFYGGADEGDRTMIDALQPALTSLLAQPKNLQAAFDAAQAGAERTCLSSKANAGRASYLSSESLLGNMDPGAQRLAMVFKALAESELG</sequence>
<evidence type="ECO:0000255" key="1">
    <source>
        <dbReference type="PROSITE-ProRule" id="PRU00813"/>
    </source>
</evidence>
<evidence type="ECO:0000255" key="2">
    <source>
        <dbReference type="PROSITE-ProRule" id="PRU00814"/>
    </source>
</evidence>
<evidence type="ECO:0000269" key="3">
    <source>
    </source>
</evidence>
<evidence type="ECO:0000269" key="4">
    <source>
    </source>
</evidence>
<evidence type="ECO:0007829" key="5">
    <source>
        <dbReference type="PDB" id="1UN8"/>
    </source>
</evidence>
<evidence type="ECO:0007829" key="6">
    <source>
        <dbReference type="PDB" id="1UN9"/>
    </source>
</evidence>
<proteinExistence type="evidence at protein level"/>
<dbReference type="EC" id="2.7.1.29"/>
<dbReference type="EMBL" id="U09771">
    <property type="protein sequence ID" value="AAB48843.1"/>
    <property type="molecule type" value="Genomic_DNA"/>
</dbReference>
<dbReference type="PDB" id="1UN8">
    <property type="method" value="X-ray"/>
    <property type="resolution" value="2.50 A"/>
    <property type="chains" value="A/B=1-552"/>
</dbReference>
<dbReference type="PDB" id="1UN9">
    <property type="method" value="X-ray"/>
    <property type="resolution" value="3.10 A"/>
    <property type="chains" value="A/B=2-552"/>
</dbReference>
<dbReference type="PDBsum" id="1UN8"/>
<dbReference type="PDBsum" id="1UN9"/>
<dbReference type="SMR" id="P45510"/>
<dbReference type="STRING" id="1333848.CFNIH1_02650"/>
<dbReference type="DrugBank" id="DB01775">
    <property type="generic name" value="Dihydroxyacetone"/>
</dbReference>
<dbReference type="DrugBank" id="DB04395">
    <property type="generic name" value="Phosphoaminophosphonic Acid-Adenylate Ester"/>
</dbReference>
<dbReference type="BioCyc" id="MetaCyc:MONOMER-4504"/>
<dbReference type="BRENDA" id="2.7.1.29">
    <property type="organism ID" value="1398"/>
</dbReference>
<dbReference type="SABIO-RK" id="P45510"/>
<dbReference type="UniPathway" id="UPA00617">
    <property type="reaction ID" value="UER00669"/>
</dbReference>
<dbReference type="EvolutionaryTrace" id="P45510"/>
<dbReference type="GO" id="GO:0005829">
    <property type="term" value="C:cytosol"/>
    <property type="evidence" value="ECO:0007669"/>
    <property type="project" value="TreeGrafter"/>
</dbReference>
<dbReference type="GO" id="GO:0005524">
    <property type="term" value="F:ATP binding"/>
    <property type="evidence" value="ECO:0007669"/>
    <property type="project" value="UniProtKB-KW"/>
</dbReference>
<dbReference type="GO" id="GO:0004371">
    <property type="term" value="F:glycerone kinase activity"/>
    <property type="evidence" value="ECO:0007669"/>
    <property type="project" value="UniProtKB-EC"/>
</dbReference>
<dbReference type="GO" id="GO:0008289">
    <property type="term" value="F:lipid binding"/>
    <property type="evidence" value="ECO:0007669"/>
    <property type="project" value="UniProtKB-KW"/>
</dbReference>
<dbReference type="GO" id="GO:0046872">
    <property type="term" value="F:metal ion binding"/>
    <property type="evidence" value="ECO:0007669"/>
    <property type="project" value="UniProtKB-KW"/>
</dbReference>
<dbReference type="GO" id="GO:0019588">
    <property type="term" value="P:anaerobic glycerol catabolic process"/>
    <property type="evidence" value="ECO:0007669"/>
    <property type="project" value="UniProtKB-UniPathway"/>
</dbReference>
<dbReference type="FunFam" id="3.40.50.10440:FF:000001">
    <property type="entry name" value="Dihydroxyacetone kinase, DhaK subunit"/>
    <property type="match status" value="1"/>
</dbReference>
<dbReference type="FunFam" id="1.25.40.340:FF:000002">
    <property type="entry name" value="Dihydroxyacetone kinase, L subunit"/>
    <property type="match status" value="1"/>
</dbReference>
<dbReference type="Gene3D" id="1.25.40.340">
    <property type="match status" value="1"/>
</dbReference>
<dbReference type="Gene3D" id="3.40.50.10440">
    <property type="entry name" value="Dihydroxyacetone kinase, domain 1"/>
    <property type="match status" value="1"/>
</dbReference>
<dbReference type="Gene3D" id="3.30.1180.20">
    <property type="entry name" value="Dihydroxyacetone kinase, domain 2"/>
    <property type="match status" value="1"/>
</dbReference>
<dbReference type="InterPro" id="IPR012734">
    <property type="entry name" value="DhaK_ATP"/>
</dbReference>
<dbReference type="InterPro" id="IPR004006">
    <property type="entry name" value="DhaK_dom"/>
</dbReference>
<dbReference type="InterPro" id="IPR004007">
    <property type="entry name" value="DhaL_dom"/>
</dbReference>
<dbReference type="InterPro" id="IPR036117">
    <property type="entry name" value="DhaL_dom_sf"/>
</dbReference>
<dbReference type="InterPro" id="IPR050861">
    <property type="entry name" value="Dihydroxyacetone_Kinase"/>
</dbReference>
<dbReference type="NCBIfam" id="TIGR02361">
    <property type="entry name" value="dak_ATP"/>
    <property type="match status" value="1"/>
</dbReference>
<dbReference type="PANTHER" id="PTHR28629">
    <property type="entry name" value="TRIOKINASE/FMN CYCLASE"/>
    <property type="match status" value="1"/>
</dbReference>
<dbReference type="PANTHER" id="PTHR28629:SF4">
    <property type="entry name" value="TRIOKINASE_FMN CYCLASE"/>
    <property type="match status" value="1"/>
</dbReference>
<dbReference type="Pfam" id="PF02733">
    <property type="entry name" value="Dak1"/>
    <property type="match status" value="1"/>
</dbReference>
<dbReference type="Pfam" id="PF02734">
    <property type="entry name" value="Dak2"/>
    <property type="match status" value="1"/>
</dbReference>
<dbReference type="SMART" id="SM01120">
    <property type="entry name" value="Dak2"/>
    <property type="match status" value="1"/>
</dbReference>
<dbReference type="SUPFAM" id="SSF82549">
    <property type="entry name" value="DAK1/DegV-like"/>
    <property type="match status" value="1"/>
</dbReference>
<dbReference type="SUPFAM" id="SSF101473">
    <property type="entry name" value="DhaL-like"/>
    <property type="match status" value="1"/>
</dbReference>
<dbReference type="PROSITE" id="PS51481">
    <property type="entry name" value="DHAK"/>
    <property type="match status" value="1"/>
</dbReference>
<dbReference type="PROSITE" id="PS51480">
    <property type="entry name" value="DHAL"/>
    <property type="match status" value="1"/>
</dbReference>
<reference key="1">
    <citation type="journal article" date="1995" name="J. Bacteriol.">
        <title>Biochemical and molecular characterization of the oxidative branch of glycerol utilization by Citrobacter freundii.</title>
        <authorList>
            <person name="Daniel R."/>
            <person name="Stuertz K."/>
            <person name="Gottschalk G."/>
        </authorList>
    </citation>
    <scope>NUCLEOTIDE SEQUENCE [GENOMIC DNA]</scope>
    <scope>PROTEIN SEQUENCE OF 2-14</scope>
    <scope>SUBUNIT</scope>
    <scope>BIOPHYSICOCHEMICAL PROPERTIES</scope>
    <scope>COFACTOR</scope>
    <scope>CATALYTIC ACTIVITY</scope>
    <source>
        <strain>ATCC 6750 / DSM 30040 / NCIB 8173 / M8BK</strain>
    </source>
</reference>
<reference key="2">
    <citation type="journal article" date="2003" name="J. Biol. Chem.">
        <title>Crystal structure of the Citrobacter freundii dihydroxyacetone kinase reveals an eight-stranded alpha-helical barrel ATP-binding domain.</title>
        <authorList>
            <person name="Siebold C."/>
            <person name="Arnold I."/>
            <person name="Garcia-Alles L.F."/>
            <person name="Baumann U."/>
            <person name="Erni B."/>
        </authorList>
    </citation>
    <scope>X-RAY CRYSTALLOGRAPHY (2.5 ANGSTROMS) IN COMPLEX WITH ATP; MAGNESIUM IONS; LIPID AND DIHYDROXYACETONE</scope>
    <scope>ACTIVE SITE</scope>
    <scope>CATALYTIC ACTIVITY</scope>
    <scope>SUBUNIT</scope>
    <scope>MUTAGENESIS OF ASP-380; ASP-385; ASP-387 AND THR-388</scope>
</reference>
<feature type="initiator methionine" description="Removed" evidence="4">
    <location>
        <position position="1"/>
    </location>
</feature>
<feature type="chain" id="PRO_0000121528" description="Dihydroxyacetone kinase">
    <location>
        <begin position="2"/>
        <end position="552"/>
    </location>
</feature>
<feature type="domain" description="DhaK" evidence="2">
    <location>
        <begin position="8"/>
        <end position="327"/>
    </location>
</feature>
<feature type="domain" description="DhaL" evidence="1">
    <location>
        <begin position="356"/>
        <end position="548"/>
    </location>
</feature>
<feature type="active site" description="Tele-hemiaminal-histidine intermediate" evidence="2 3">
    <location>
        <position position="220"/>
    </location>
</feature>
<feature type="binding site">
    <location>
        <begin position="58"/>
        <end position="61"/>
    </location>
    <ligand>
        <name>substrate</name>
    </ligand>
</feature>
<feature type="binding site">
    <location>
        <position position="109"/>
    </location>
    <ligand>
        <name>substrate</name>
    </ligand>
</feature>
<feature type="binding site">
    <location>
        <position position="114"/>
    </location>
    <ligand>
        <name>substrate</name>
    </ligand>
</feature>
<feature type="binding site" evidence="3">
    <location>
        <begin position="385"/>
        <end position="388"/>
    </location>
    <ligand>
        <name>ATP</name>
        <dbReference type="ChEBI" id="CHEBI:30616"/>
    </ligand>
</feature>
<feature type="binding site" evidence="3">
    <location>
        <begin position="431"/>
        <end position="432"/>
    </location>
    <ligand>
        <name>ATP</name>
        <dbReference type="ChEBI" id="CHEBI:30616"/>
    </ligand>
</feature>
<feature type="binding site" evidence="3">
    <location>
        <position position="468"/>
    </location>
    <ligand>
        <name>ATP</name>
        <dbReference type="ChEBI" id="CHEBI:30616"/>
    </ligand>
</feature>
<feature type="binding site" evidence="3">
    <location>
        <begin position="476"/>
        <end position="477"/>
    </location>
    <ligand>
        <name>ATP</name>
        <dbReference type="ChEBI" id="CHEBI:30616"/>
    </ligand>
</feature>
<feature type="binding site" evidence="3">
    <location>
        <begin position="533"/>
        <end position="535"/>
    </location>
    <ligand>
        <name>ATP</name>
        <dbReference type="ChEBI" id="CHEBI:30616"/>
    </ligand>
</feature>
<feature type="mutagenesis site" description="Loss of kinase activity." evidence="3">
    <original>D</original>
    <variation>A</variation>
    <location>
        <position position="380"/>
    </location>
</feature>
<feature type="mutagenesis site" description="Loss of kinase activity." evidence="3">
    <original>D</original>
    <variation>A</variation>
    <location>
        <position position="385"/>
    </location>
</feature>
<feature type="mutagenesis site" description="Loss of kinase activity." evidence="3">
    <original>D</original>
    <variation>A</variation>
    <location>
        <position position="387"/>
    </location>
</feature>
<feature type="mutagenesis site" description="Reduced kinase activity." evidence="3">
    <original>T</original>
    <variation>H</variation>
    <location>
        <position position="388"/>
    </location>
</feature>
<feature type="helix" evidence="5">
    <location>
        <begin position="9"/>
        <end position="11"/>
    </location>
</feature>
<feature type="helix" evidence="5">
    <location>
        <begin position="12"/>
        <end position="22"/>
    </location>
</feature>
<feature type="strand" evidence="5">
    <location>
        <begin position="29"/>
        <end position="32"/>
    </location>
</feature>
<feature type="strand" evidence="5">
    <location>
        <begin position="40"/>
        <end position="44"/>
    </location>
</feature>
<feature type="strand" evidence="5">
    <location>
        <begin position="52"/>
        <end position="61"/>
    </location>
</feature>
<feature type="turn" evidence="5">
    <location>
        <begin position="62"/>
        <end position="65"/>
    </location>
</feature>
<feature type="helix" evidence="5">
    <location>
        <begin position="66"/>
        <end position="68"/>
    </location>
</feature>
<feature type="strand" evidence="5">
    <location>
        <begin position="73"/>
        <end position="82"/>
    </location>
</feature>
<feature type="helix" evidence="5">
    <location>
        <begin position="88"/>
        <end position="98"/>
    </location>
</feature>
<feature type="strand" evidence="5">
    <location>
        <begin position="104"/>
        <end position="110"/>
    </location>
</feature>
<feature type="helix" evidence="5">
    <location>
        <begin position="112"/>
        <end position="127"/>
    </location>
</feature>
<feature type="strand" evidence="5">
    <location>
        <begin position="132"/>
        <end position="137"/>
    </location>
</feature>
<feature type="strand" evidence="6">
    <location>
        <begin position="146"/>
        <end position="148"/>
    </location>
</feature>
<feature type="helix" evidence="5">
    <location>
        <begin position="155"/>
        <end position="167"/>
    </location>
</feature>
<feature type="helix" evidence="5">
    <location>
        <begin position="172"/>
        <end position="184"/>
    </location>
</feature>
<feature type="strand" evidence="5">
    <location>
        <begin position="186"/>
        <end position="194"/>
    </location>
</feature>
<feature type="strand" evidence="5">
    <location>
        <begin position="203"/>
        <end position="205"/>
    </location>
</feature>
<feature type="strand" evidence="5">
    <location>
        <begin position="213"/>
        <end position="215"/>
    </location>
</feature>
<feature type="strand" evidence="5">
    <location>
        <begin position="225"/>
        <end position="229"/>
    </location>
</feature>
<feature type="helix" evidence="5">
    <location>
        <begin position="233"/>
        <end position="247"/>
    </location>
</feature>
<feature type="strand" evidence="5">
    <location>
        <begin position="254"/>
        <end position="260"/>
    </location>
</feature>
<feature type="helix" evidence="5">
    <location>
        <begin position="266"/>
        <end position="277"/>
    </location>
</feature>
<feature type="helix" evidence="5">
    <location>
        <begin position="282"/>
        <end position="284"/>
    </location>
</feature>
<feature type="strand" evidence="5">
    <location>
        <begin position="285"/>
        <end position="292"/>
    </location>
</feature>
<feature type="strand" evidence="5">
    <location>
        <begin position="300"/>
        <end position="309"/>
    </location>
</feature>
<feature type="helix" evidence="5">
    <location>
        <begin position="314"/>
        <end position="319"/>
    </location>
</feature>
<feature type="helix" evidence="5">
    <location>
        <begin position="356"/>
        <end position="371"/>
    </location>
</feature>
<feature type="helix" evidence="5">
    <location>
        <begin position="373"/>
        <end position="381"/>
    </location>
</feature>
<feature type="strand" evidence="6">
    <location>
        <begin position="384"/>
        <end position="386"/>
    </location>
</feature>
<feature type="helix" evidence="5">
    <location>
        <begin position="388"/>
        <end position="404"/>
    </location>
</feature>
<feature type="helix" evidence="5">
    <location>
        <begin position="413"/>
        <end position="427"/>
    </location>
</feature>
<feature type="helix" evidence="5">
    <location>
        <begin position="430"/>
        <end position="448"/>
    </location>
</feature>
<feature type="helix" evidence="5">
    <location>
        <begin position="453"/>
        <end position="468"/>
    </location>
</feature>
<feature type="strand" evidence="5">
    <location>
        <begin position="474"/>
        <end position="476"/>
    </location>
</feature>
<feature type="helix" evidence="5">
    <location>
        <begin position="478"/>
        <end position="490"/>
    </location>
</feature>
<feature type="helix" evidence="5">
    <location>
        <begin position="495"/>
        <end position="511"/>
    </location>
</feature>
<feature type="helix" evidence="5">
    <location>
        <begin position="529"/>
        <end position="531"/>
    </location>
</feature>
<feature type="helix" evidence="5">
    <location>
        <begin position="534"/>
        <end position="547"/>
    </location>
</feature>
<organism>
    <name type="scientific">Citrobacter freundii</name>
    <dbReference type="NCBI Taxonomy" id="546"/>
    <lineage>
        <taxon>Bacteria</taxon>
        <taxon>Pseudomonadati</taxon>
        <taxon>Pseudomonadota</taxon>
        <taxon>Gammaproteobacteria</taxon>
        <taxon>Enterobacterales</taxon>
        <taxon>Enterobacteriaceae</taxon>
        <taxon>Citrobacter</taxon>
        <taxon>Citrobacter freundii complex</taxon>
    </lineage>
</organism>
<keyword id="KW-0002">3D-structure</keyword>
<keyword id="KW-0067">ATP-binding</keyword>
<keyword id="KW-0106">Calcium</keyword>
<keyword id="KW-0903">Direct protein sequencing</keyword>
<keyword id="KW-0319">Glycerol metabolism</keyword>
<keyword id="KW-0418">Kinase</keyword>
<keyword id="KW-0446">Lipid-binding</keyword>
<keyword id="KW-0460">Magnesium</keyword>
<keyword id="KW-0479">Metal-binding</keyword>
<keyword id="KW-0547">Nucleotide-binding</keyword>
<keyword id="KW-0808">Transferase</keyword>
<protein>
    <recommendedName>
        <fullName>Dihydroxyacetone kinase</fullName>
        <shortName>DHA kinase</shortName>
        <ecNumber>2.7.1.29</ecNumber>
    </recommendedName>
    <alternativeName>
        <fullName>Glycerone kinase</fullName>
    </alternativeName>
</protein>
<name>DHAK_CITFR</name>